<dbReference type="EC" id="3.4.11.4" evidence="1"/>
<dbReference type="EMBL" id="FM211187">
    <property type="protein sequence ID" value="CAR68758.1"/>
    <property type="molecule type" value="Genomic_DNA"/>
</dbReference>
<dbReference type="RefSeq" id="WP_000222032.1">
    <property type="nucleotide sequence ID" value="NC_011900.1"/>
</dbReference>
<dbReference type="SMR" id="B8ZPG1"/>
<dbReference type="MEROPS" id="M20.003"/>
<dbReference type="KEGG" id="sne:SPN23F09330"/>
<dbReference type="HOGENOM" id="CLU_053676_0_0_9"/>
<dbReference type="GO" id="GO:0005829">
    <property type="term" value="C:cytosol"/>
    <property type="evidence" value="ECO:0007669"/>
    <property type="project" value="TreeGrafter"/>
</dbReference>
<dbReference type="GO" id="GO:0008237">
    <property type="term" value="F:metallopeptidase activity"/>
    <property type="evidence" value="ECO:0007669"/>
    <property type="project" value="UniProtKB-KW"/>
</dbReference>
<dbReference type="GO" id="GO:0045148">
    <property type="term" value="F:tripeptide aminopeptidase activity"/>
    <property type="evidence" value="ECO:0007669"/>
    <property type="project" value="UniProtKB-UniRule"/>
</dbReference>
<dbReference type="GO" id="GO:0008270">
    <property type="term" value="F:zinc ion binding"/>
    <property type="evidence" value="ECO:0007669"/>
    <property type="project" value="UniProtKB-UniRule"/>
</dbReference>
<dbReference type="GO" id="GO:0043171">
    <property type="term" value="P:peptide catabolic process"/>
    <property type="evidence" value="ECO:0007669"/>
    <property type="project" value="UniProtKB-UniRule"/>
</dbReference>
<dbReference type="GO" id="GO:0006508">
    <property type="term" value="P:proteolysis"/>
    <property type="evidence" value="ECO:0007669"/>
    <property type="project" value="UniProtKB-UniRule"/>
</dbReference>
<dbReference type="CDD" id="cd03892">
    <property type="entry name" value="M20_peptT"/>
    <property type="match status" value="1"/>
</dbReference>
<dbReference type="FunFam" id="3.30.70.360:FF:000002">
    <property type="entry name" value="Peptidase T"/>
    <property type="match status" value="1"/>
</dbReference>
<dbReference type="Gene3D" id="3.30.70.360">
    <property type="match status" value="1"/>
</dbReference>
<dbReference type="Gene3D" id="3.40.630.10">
    <property type="entry name" value="Zn peptidases"/>
    <property type="match status" value="1"/>
</dbReference>
<dbReference type="HAMAP" id="MF_00550">
    <property type="entry name" value="Aminopeptidase_M20"/>
    <property type="match status" value="1"/>
</dbReference>
<dbReference type="InterPro" id="IPR001261">
    <property type="entry name" value="ArgE/DapE_CS"/>
</dbReference>
<dbReference type="InterPro" id="IPR036264">
    <property type="entry name" value="Bact_exopeptidase_dim_dom"/>
</dbReference>
<dbReference type="InterPro" id="IPR002933">
    <property type="entry name" value="Peptidase_M20"/>
</dbReference>
<dbReference type="InterPro" id="IPR011650">
    <property type="entry name" value="Peptidase_M20_dimer"/>
</dbReference>
<dbReference type="InterPro" id="IPR010161">
    <property type="entry name" value="Peptidase_M20B"/>
</dbReference>
<dbReference type="NCBIfam" id="TIGR01882">
    <property type="entry name" value="peptidase-T"/>
    <property type="match status" value="1"/>
</dbReference>
<dbReference type="NCBIfam" id="NF003976">
    <property type="entry name" value="PRK05469.1"/>
    <property type="match status" value="1"/>
</dbReference>
<dbReference type="NCBIfam" id="NF009920">
    <property type="entry name" value="PRK13381.1"/>
    <property type="match status" value="1"/>
</dbReference>
<dbReference type="PANTHER" id="PTHR42994">
    <property type="entry name" value="PEPTIDASE T"/>
    <property type="match status" value="1"/>
</dbReference>
<dbReference type="PANTHER" id="PTHR42994:SF1">
    <property type="entry name" value="PEPTIDASE T"/>
    <property type="match status" value="1"/>
</dbReference>
<dbReference type="Pfam" id="PF07687">
    <property type="entry name" value="M20_dimer"/>
    <property type="match status" value="1"/>
</dbReference>
<dbReference type="Pfam" id="PF01546">
    <property type="entry name" value="Peptidase_M20"/>
    <property type="match status" value="1"/>
</dbReference>
<dbReference type="PIRSF" id="PIRSF037215">
    <property type="entry name" value="Peptidase_M20B"/>
    <property type="match status" value="1"/>
</dbReference>
<dbReference type="SUPFAM" id="SSF55031">
    <property type="entry name" value="Bacterial exopeptidase dimerisation domain"/>
    <property type="match status" value="1"/>
</dbReference>
<dbReference type="SUPFAM" id="SSF53187">
    <property type="entry name" value="Zn-dependent exopeptidases"/>
    <property type="match status" value="1"/>
</dbReference>
<dbReference type="PROSITE" id="PS00758">
    <property type="entry name" value="ARGE_DAPE_CPG2_1"/>
    <property type="match status" value="1"/>
</dbReference>
<dbReference type="PROSITE" id="PS00759">
    <property type="entry name" value="ARGE_DAPE_CPG2_2"/>
    <property type="match status" value="1"/>
</dbReference>
<evidence type="ECO:0000255" key="1">
    <source>
        <dbReference type="HAMAP-Rule" id="MF_00550"/>
    </source>
</evidence>
<protein>
    <recommendedName>
        <fullName evidence="1">Peptidase T</fullName>
        <ecNumber evidence="1">3.4.11.4</ecNumber>
    </recommendedName>
    <alternativeName>
        <fullName evidence="1">Aminotripeptidase</fullName>
        <shortName evidence="1">Tripeptidase</shortName>
    </alternativeName>
    <alternativeName>
        <fullName evidence="1">Tripeptide aminopeptidase</fullName>
    </alternativeName>
</protein>
<comment type="function">
    <text evidence="1">Cleaves the N-terminal amino acid of tripeptides.</text>
</comment>
<comment type="catalytic activity">
    <reaction evidence="1">
        <text>Release of the N-terminal residue from a tripeptide.</text>
        <dbReference type="EC" id="3.4.11.4"/>
    </reaction>
</comment>
<comment type="cofactor">
    <cofactor evidence="1">
        <name>Zn(2+)</name>
        <dbReference type="ChEBI" id="CHEBI:29105"/>
    </cofactor>
    <text evidence="1">Binds 2 Zn(2+) ions per subunit.</text>
</comment>
<comment type="subcellular location">
    <subcellularLocation>
        <location evidence="1">Cytoplasm</location>
    </subcellularLocation>
</comment>
<comment type="similarity">
    <text evidence="1">Belongs to the peptidase M20B family.</text>
</comment>
<accession>B8ZPG1</accession>
<proteinExistence type="inferred from homology"/>
<gene>
    <name evidence="1" type="primary">pepT</name>
    <name type="ordered locus">SPN23F09330</name>
</gene>
<keyword id="KW-0031">Aminopeptidase</keyword>
<keyword id="KW-0963">Cytoplasm</keyword>
<keyword id="KW-0378">Hydrolase</keyword>
<keyword id="KW-0479">Metal-binding</keyword>
<keyword id="KW-0482">Metalloprotease</keyword>
<keyword id="KW-0645">Protease</keyword>
<keyword id="KW-0862">Zinc</keyword>
<feature type="chain" id="PRO_1000200900" description="Peptidase T">
    <location>
        <begin position="1"/>
        <end position="407"/>
    </location>
</feature>
<feature type="active site" evidence="1">
    <location>
        <position position="83"/>
    </location>
</feature>
<feature type="active site" description="Proton acceptor" evidence="1">
    <location>
        <position position="176"/>
    </location>
</feature>
<feature type="binding site" evidence="1">
    <location>
        <position position="81"/>
    </location>
    <ligand>
        <name>Zn(2+)</name>
        <dbReference type="ChEBI" id="CHEBI:29105"/>
        <label>1</label>
    </ligand>
</feature>
<feature type="binding site" evidence="1">
    <location>
        <position position="142"/>
    </location>
    <ligand>
        <name>Zn(2+)</name>
        <dbReference type="ChEBI" id="CHEBI:29105"/>
        <label>1</label>
    </ligand>
</feature>
<feature type="binding site" evidence="1">
    <location>
        <position position="142"/>
    </location>
    <ligand>
        <name>Zn(2+)</name>
        <dbReference type="ChEBI" id="CHEBI:29105"/>
        <label>2</label>
    </ligand>
</feature>
<feature type="binding site" evidence="1">
    <location>
        <position position="177"/>
    </location>
    <ligand>
        <name>Zn(2+)</name>
        <dbReference type="ChEBI" id="CHEBI:29105"/>
        <label>2</label>
    </ligand>
</feature>
<feature type="binding site" evidence="1">
    <location>
        <position position="199"/>
    </location>
    <ligand>
        <name>Zn(2+)</name>
        <dbReference type="ChEBI" id="CHEBI:29105"/>
        <label>1</label>
    </ligand>
</feature>
<feature type="binding site" evidence="1">
    <location>
        <position position="381"/>
    </location>
    <ligand>
        <name>Zn(2+)</name>
        <dbReference type="ChEBI" id="CHEBI:29105"/>
        <label>2</label>
    </ligand>
</feature>
<name>PEPT_STRPJ</name>
<organism>
    <name type="scientific">Streptococcus pneumoniae (strain ATCC 700669 / Spain 23F-1)</name>
    <dbReference type="NCBI Taxonomy" id="561276"/>
    <lineage>
        <taxon>Bacteria</taxon>
        <taxon>Bacillati</taxon>
        <taxon>Bacillota</taxon>
        <taxon>Bacilli</taxon>
        <taxon>Lactobacillales</taxon>
        <taxon>Streptococcaceae</taxon>
        <taxon>Streptococcus</taxon>
    </lineage>
</organism>
<sequence length="407" mass="44865">MTYPNLLDRFLTYVKVNTRSDEHSTTTPSTQSQVDFATNVLIPEMKRVGLQNVYYLPNGFAIGTLPANDPSLTRKIGFISHMDTADFNAEGVNPQVIENYDGGVIELGNSGFKLDPADFKSLEKYPGQTLITTDGTSLLGADDKSGIAEIMTAIEYLTAHPEIKHCEIRVGFGPDEEIGVGANKFDAEDFDVDFAYTVDGGPLGELQYETFSAAGAELHFQGRNVHPGTAKEQMVNALQLAIDFHNQLPENDRPELTEGYQGFYHLMDVTGSVEEVRASYIIRDFEKDAFEARKASMQSIADKMNAELGSYRVTLNLTDQYYNMKEVIEKDMTPITIAKAVMEDLGITPIIEPIRGGTDGSKISFMGIPTPNIFAGGENMHGRFEYVSLQTMERAVDTIIGIVAYKG</sequence>
<reference key="1">
    <citation type="journal article" date="2009" name="J. Bacteriol.">
        <title>Role of conjugative elements in the evolution of the multidrug-resistant pandemic clone Streptococcus pneumoniae Spain23F ST81.</title>
        <authorList>
            <person name="Croucher N.J."/>
            <person name="Walker D."/>
            <person name="Romero P."/>
            <person name="Lennard N."/>
            <person name="Paterson G.K."/>
            <person name="Bason N.C."/>
            <person name="Mitchell A.M."/>
            <person name="Quail M.A."/>
            <person name="Andrew P.W."/>
            <person name="Parkhill J."/>
            <person name="Bentley S.D."/>
            <person name="Mitchell T.J."/>
        </authorList>
    </citation>
    <scope>NUCLEOTIDE SEQUENCE [LARGE SCALE GENOMIC DNA]</scope>
    <source>
        <strain>ATCC 700669 / Spain 23F-1</strain>
    </source>
</reference>